<name>PSAA_NICTO</name>
<accession>Q33C36</accession>
<comment type="function">
    <text>PsaA and PsaB bind P700, the primary electron donor of photosystem I (PSI), as well as the electron acceptors A0, A1 and FX. PSI is a plastocyanin-ferredoxin oxidoreductase, converting photonic excitation into a charge separation, which transfers an electron from the donor P700 chlorophyll pair to the spectroscopically characterized acceptors A0, A1, FX, FA and FB in turn. Oxidized P700 is reduced on the lumenal side of the thylakoid membrane by plastocyanin.</text>
</comment>
<comment type="catalytic activity">
    <reaction evidence="1">
        <text>reduced [plastocyanin] + hnu + oxidized [2Fe-2S]-[ferredoxin] = oxidized [plastocyanin] + reduced [2Fe-2S]-[ferredoxin]</text>
        <dbReference type="Rhea" id="RHEA:30407"/>
        <dbReference type="Rhea" id="RHEA-COMP:10000"/>
        <dbReference type="Rhea" id="RHEA-COMP:10001"/>
        <dbReference type="Rhea" id="RHEA-COMP:10039"/>
        <dbReference type="Rhea" id="RHEA-COMP:10040"/>
        <dbReference type="ChEBI" id="CHEBI:29036"/>
        <dbReference type="ChEBI" id="CHEBI:30212"/>
        <dbReference type="ChEBI" id="CHEBI:33737"/>
        <dbReference type="ChEBI" id="CHEBI:33738"/>
        <dbReference type="ChEBI" id="CHEBI:49552"/>
        <dbReference type="EC" id="1.97.1.12"/>
    </reaction>
</comment>
<comment type="cofactor">
    <text evidence="1">P700 is a chlorophyll a/chlorophyll a' dimer, A0 is one or more chlorophyll a, A1 is one or both phylloquinones and FX is a shared 4Fe-4S iron-sulfur center.</text>
</comment>
<comment type="subunit">
    <text evidence="1">The PsaA/B heterodimer binds the P700 chlorophyll special pair and subsequent electron acceptors. PSI consists of a core antenna complex that captures photons, and an electron transfer chain that converts photonic excitation into a charge separation. The eukaryotic PSI reaction center is composed of at least 11 subunits.</text>
</comment>
<comment type="subcellular location">
    <subcellularLocation>
        <location evidence="1">Plastid</location>
        <location evidence="1">Chloroplast thylakoid membrane</location>
        <topology evidence="1">Multi-pass membrane protein</topology>
    </subcellularLocation>
</comment>
<comment type="similarity">
    <text evidence="1">Belongs to the PsaA/PsaB family.</text>
</comment>
<keyword id="KW-0004">4Fe-4S</keyword>
<keyword id="KW-0148">Chlorophyll</keyword>
<keyword id="KW-0150">Chloroplast</keyword>
<keyword id="KW-0157">Chromophore</keyword>
<keyword id="KW-0249">Electron transport</keyword>
<keyword id="KW-0408">Iron</keyword>
<keyword id="KW-0411">Iron-sulfur</keyword>
<keyword id="KW-0460">Magnesium</keyword>
<keyword id="KW-0472">Membrane</keyword>
<keyword id="KW-0479">Metal-binding</keyword>
<keyword id="KW-0560">Oxidoreductase</keyword>
<keyword id="KW-0602">Photosynthesis</keyword>
<keyword id="KW-0603">Photosystem I</keyword>
<keyword id="KW-0934">Plastid</keyword>
<keyword id="KW-0793">Thylakoid</keyword>
<keyword id="KW-0812">Transmembrane</keyword>
<keyword id="KW-1133">Transmembrane helix</keyword>
<keyword id="KW-0813">Transport</keyword>
<feature type="chain" id="PRO_0000275953" description="Photosystem I P700 chlorophyll a apoprotein A1">
    <location>
        <begin position="1"/>
        <end position="750"/>
    </location>
</feature>
<feature type="transmembrane region" description="Helical; Name=I" evidence="1">
    <location>
        <begin position="70"/>
        <end position="93"/>
    </location>
</feature>
<feature type="transmembrane region" description="Helical; Name=II" evidence="1">
    <location>
        <begin position="156"/>
        <end position="179"/>
    </location>
</feature>
<feature type="transmembrane region" description="Helical; Name=III" evidence="1">
    <location>
        <begin position="195"/>
        <end position="219"/>
    </location>
</feature>
<feature type="transmembrane region" description="Helical; Name=IV" evidence="1">
    <location>
        <begin position="291"/>
        <end position="309"/>
    </location>
</feature>
<feature type="transmembrane region" description="Helical; Name=V" evidence="1">
    <location>
        <begin position="346"/>
        <end position="369"/>
    </location>
</feature>
<feature type="transmembrane region" description="Helical; Name=VI" evidence="1">
    <location>
        <begin position="385"/>
        <end position="411"/>
    </location>
</feature>
<feature type="transmembrane region" description="Helical; Name=VII" evidence="1">
    <location>
        <begin position="433"/>
        <end position="455"/>
    </location>
</feature>
<feature type="transmembrane region" description="Helical; Name=VIII" evidence="1">
    <location>
        <begin position="531"/>
        <end position="549"/>
    </location>
</feature>
<feature type="transmembrane region" description="Helical; Name=IX" evidence="1">
    <location>
        <begin position="589"/>
        <end position="610"/>
    </location>
</feature>
<feature type="transmembrane region" description="Helical; Name=X" evidence="1">
    <location>
        <begin position="664"/>
        <end position="686"/>
    </location>
</feature>
<feature type="transmembrane region" description="Helical; Name=XI" evidence="1">
    <location>
        <begin position="724"/>
        <end position="744"/>
    </location>
</feature>
<feature type="binding site" evidence="1">
    <location>
        <position position="573"/>
    </location>
    <ligand>
        <name>[4Fe-4S] cluster</name>
        <dbReference type="ChEBI" id="CHEBI:49883"/>
        <note>ligand shared between dimeric partners</note>
    </ligand>
</feature>
<feature type="binding site" evidence="1">
    <location>
        <position position="582"/>
    </location>
    <ligand>
        <name>[4Fe-4S] cluster</name>
        <dbReference type="ChEBI" id="CHEBI:49883"/>
        <note>ligand shared between dimeric partners</note>
    </ligand>
</feature>
<feature type="binding site" description="axial binding residue" evidence="1">
    <location>
        <position position="675"/>
    </location>
    <ligand>
        <name>chlorophyll a'</name>
        <dbReference type="ChEBI" id="CHEBI:189419"/>
        <label>A1</label>
    </ligand>
    <ligandPart>
        <name>Mg</name>
        <dbReference type="ChEBI" id="CHEBI:25107"/>
    </ligandPart>
</feature>
<feature type="binding site" description="axial binding residue" evidence="1">
    <location>
        <position position="683"/>
    </location>
    <ligand>
        <name>chlorophyll a</name>
        <dbReference type="ChEBI" id="CHEBI:58416"/>
        <label>A3</label>
    </ligand>
    <ligandPart>
        <name>Mg</name>
        <dbReference type="ChEBI" id="CHEBI:25107"/>
    </ligandPart>
</feature>
<feature type="binding site" evidence="1">
    <location>
        <position position="691"/>
    </location>
    <ligand>
        <name>chlorophyll a</name>
        <dbReference type="ChEBI" id="CHEBI:58416"/>
        <label>A3</label>
    </ligand>
</feature>
<feature type="binding site" evidence="1">
    <location>
        <position position="692"/>
    </location>
    <ligand>
        <name>phylloquinone</name>
        <dbReference type="ChEBI" id="CHEBI:18067"/>
        <label>A</label>
    </ligand>
</feature>
<protein>
    <recommendedName>
        <fullName evidence="1">Photosystem I P700 chlorophyll a apoprotein A1</fullName>
        <ecNumber evidence="1">1.97.1.12</ecNumber>
    </recommendedName>
    <alternativeName>
        <fullName evidence="1">PSI-A</fullName>
    </alternativeName>
    <alternativeName>
        <fullName evidence="1">PsaA</fullName>
    </alternativeName>
</protein>
<geneLocation type="chloroplast"/>
<gene>
    <name evidence="1" type="primary">psaA</name>
</gene>
<reference key="1">
    <citation type="journal article" date="2006" name="Mol. Genet. Genomics">
        <title>The chloroplast genome of Nicotiana sylvestris and Nicotiana tomentosiformis: complete sequencing confirms that the Nicotiana sylvestris progenitor is the maternal genome donor of Nicotiana tabacum.</title>
        <authorList>
            <person name="Yukawa M."/>
            <person name="Tsudzuki T."/>
            <person name="Sugiura M."/>
        </authorList>
    </citation>
    <scope>NUCLEOTIDE SEQUENCE [LARGE SCALE GENOMIC DNA]</scope>
</reference>
<proteinExistence type="inferred from homology"/>
<sequence length="750" mass="83031">MIIRSPEPEVKILVDRDPVKTSFEEWARPGHFSRTIAKGPDTTTWIWNLHADAHDFDSHTSDLEEISRKVFSAHFGQLSIIFLWLSGMYFHGARFSNYEAWLSDPTHIGPSAQVVWPIVGQEILNGDVGGGFRGIQITSGFFQIWRASGITSELQLYCTAIGALVFAALMLFAGWFHYHKAAPKLAWFQDVESMLNHHLAGLLGLGSLSWAGHQVHVSLPINQFLNAGVDPKEIPLPHEFILNRDLLAQLYPSFAEGATPFFTLNWSKYADFLTFRGGLDPVTGGLWLTDIAHHHLAIAILFLIAGHMYRTNWGIGHGLKDILEAHKGPFTGQGHKGLYEILTTSWHAQLSLNLAMLGSLTIVVAHHMYSMPPYPYLATDYGTQLSLFTHHMWIGGFLIVGAAAHAAIFMVRDYDPTTRYNDLLDRVLRHRDAIISHLNWACIFLGFHSFGLYIHNDTMSALGRPQDMFSDTAIQLQPVFAQWIQNTHALAPGATAPGATASTSLTWGGGDLVAVGGKVALLPIPLGTADFLVHHIHAFTIHVTVLILLKGVLFARSSRLIPDKANLGFRFPCDGPGRGGTCQVSAWDHVFLGLFWMYNAISVVIFHFSWKMQSDVWGSVSDQGVVTHITGGNFAQSSITINGWLRDFLWAQASQVIQSYGSSLSAYGLFFLGAHFVWAFSLMFLFSGRGYWQELIESIVWAHNKLKVAPATQPRALSIIQGRAVGVTHYLLGGIATTWAFFLARIIAVG</sequence>
<dbReference type="EC" id="1.97.1.12" evidence="1"/>
<dbReference type="EMBL" id="AB240139">
    <property type="protein sequence ID" value="BAE47999.1"/>
    <property type="molecule type" value="Genomic_DNA"/>
</dbReference>
<dbReference type="RefSeq" id="YP_398861.1">
    <property type="nucleotide sequence ID" value="NC_007602.1"/>
</dbReference>
<dbReference type="SMR" id="Q33C36"/>
<dbReference type="GeneID" id="3776362"/>
<dbReference type="KEGG" id="nto:3776362"/>
<dbReference type="OrthoDB" id="1252832at2759"/>
<dbReference type="GO" id="GO:0009535">
    <property type="term" value="C:chloroplast thylakoid membrane"/>
    <property type="evidence" value="ECO:0007669"/>
    <property type="project" value="UniProtKB-SubCell"/>
</dbReference>
<dbReference type="GO" id="GO:0009522">
    <property type="term" value="C:photosystem I"/>
    <property type="evidence" value="ECO:0007669"/>
    <property type="project" value="UniProtKB-KW"/>
</dbReference>
<dbReference type="GO" id="GO:0051539">
    <property type="term" value="F:4 iron, 4 sulfur cluster binding"/>
    <property type="evidence" value="ECO:0007669"/>
    <property type="project" value="UniProtKB-KW"/>
</dbReference>
<dbReference type="GO" id="GO:0016168">
    <property type="term" value="F:chlorophyll binding"/>
    <property type="evidence" value="ECO:0007669"/>
    <property type="project" value="UniProtKB-KW"/>
</dbReference>
<dbReference type="GO" id="GO:0009055">
    <property type="term" value="F:electron transfer activity"/>
    <property type="evidence" value="ECO:0007669"/>
    <property type="project" value="UniProtKB-UniRule"/>
</dbReference>
<dbReference type="GO" id="GO:0000287">
    <property type="term" value="F:magnesium ion binding"/>
    <property type="evidence" value="ECO:0007669"/>
    <property type="project" value="UniProtKB-UniRule"/>
</dbReference>
<dbReference type="GO" id="GO:0016491">
    <property type="term" value="F:oxidoreductase activity"/>
    <property type="evidence" value="ECO:0007669"/>
    <property type="project" value="UniProtKB-KW"/>
</dbReference>
<dbReference type="GO" id="GO:0015979">
    <property type="term" value="P:photosynthesis"/>
    <property type="evidence" value="ECO:0007669"/>
    <property type="project" value="UniProtKB-UniRule"/>
</dbReference>
<dbReference type="FunFam" id="1.20.1130.10:FF:000001">
    <property type="entry name" value="Photosystem I P700 chlorophyll a apoprotein A2"/>
    <property type="match status" value="1"/>
</dbReference>
<dbReference type="Gene3D" id="1.20.1130.10">
    <property type="entry name" value="Photosystem I PsaA/PsaB"/>
    <property type="match status" value="1"/>
</dbReference>
<dbReference type="HAMAP" id="MF_00458">
    <property type="entry name" value="PSI_PsaA"/>
    <property type="match status" value="1"/>
</dbReference>
<dbReference type="InterPro" id="IPR006243">
    <property type="entry name" value="PSI_PsaA"/>
</dbReference>
<dbReference type="InterPro" id="IPR001280">
    <property type="entry name" value="PSI_PsaA/B"/>
</dbReference>
<dbReference type="InterPro" id="IPR020586">
    <property type="entry name" value="PSI_PsaA/B_CS"/>
</dbReference>
<dbReference type="InterPro" id="IPR036408">
    <property type="entry name" value="PSI_PsaA/B_sf"/>
</dbReference>
<dbReference type="NCBIfam" id="TIGR01335">
    <property type="entry name" value="psaA"/>
    <property type="match status" value="1"/>
</dbReference>
<dbReference type="PANTHER" id="PTHR30128">
    <property type="entry name" value="OUTER MEMBRANE PROTEIN, OMPA-RELATED"/>
    <property type="match status" value="1"/>
</dbReference>
<dbReference type="PANTHER" id="PTHR30128:SF19">
    <property type="entry name" value="PHOTOSYSTEM I P700 CHLOROPHYLL A APOPROTEIN A1-RELATED"/>
    <property type="match status" value="1"/>
</dbReference>
<dbReference type="Pfam" id="PF00223">
    <property type="entry name" value="PsaA_PsaB"/>
    <property type="match status" value="1"/>
</dbReference>
<dbReference type="PIRSF" id="PIRSF002905">
    <property type="entry name" value="PSI_A"/>
    <property type="match status" value="1"/>
</dbReference>
<dbReference type="PRINTS" id="PR00257">
    <property type="entry name" value="PHOTSYSPSAAB"/>
</dbReference>
<dbReference type="SUPFAM" id="SSF81558">
    <property type="entry name" value="Photosystem I subunits PsaA/PsaB"/>
    <property type="match status" value="1"/>
</dbReference>
<dbReference type="PROSITE" id="PS00419">
    <property type="entry name" value="PHOTOSYSTEM_I_PSAAB"/>
    <property type="match status" value="1"/>
</dbReference>
<organism>
    <name type="scientific">Nicotiana tomentosiformis</name>
    <name type="common">Tobacco</name>
    <dbReference type="NCBI Taxonomy" id="4098"/>
    <lineage>
        <taxon>Eukaryota</taxon>
        <taxon>Viridiplantae</taxon>
        <taxon>Streptophyta</taxon>
        <taxon>Embryophyta</taxon>
        <taxon>Tracheophyta</taxon>
        <taxon>Spermatophyta</taxon>
        <taxon>Magnoliopsida</taxon>
        <taxon>eudicotyledons</taxon>
        <taxon>Gunneridae</taxon>
        <taxon>Pentapetalae</taxon>
        <taxon>asterids</taxon>
        <taxon>lamiids</taxon>
        <taxon>Solanales</taxon>
        <taxon>Solanaceae</taxon>
        <taxon>Nicotianoideae</taxon>
        <taxon>Nicotianeae</taxon>
        <taxon>Nicotiana</taxon>
    </lineage>
</organism>
<evidence type="ECO:0000255" key="1">
    <source>
        <dbReference type="HAMAP-Rule" id="MF_00458"/>
    </source>
</evidence>